<gene>
    <name type="primary">pfn-3</name>
    <name type="ORF">K03E6.6</name>
</gene>
<reference key="1">
    <citation type="journal article" date="2006" name="Cell Motil. Cytoskeleton">
        <title>Caenorhabditis elegans expresses three functional profilins in a tissue-specific manner.</title>
        <authorList>
            <person name="Polet D."/>
            <person name="Lambrechts A."/>
            <person name="Ono K."/>
            <person name="Mah A."/>
            <person name="Peelman F."/>
            <person name="Vandekerckhove J."/>
            <person name="Baillie D.L."/>
            <person name="Ampe C."/>
            <person name="Ono S."/>
        </authorList>
    </citation>
    <scope>NUCLEOTIDE SEQUENCE [MRNA]</scope>
    <scope>FUNCTION</scope>
    <scope>TISSUE SPECIFICITY</scope>
</reference>
<reference key="2">
    <citation type="journal article" date="1998" name="Science">
        <title>Genome sequence of the nematode C. elegans: a platform for investigating biology.</title>
        <authorList>
            <consortium name="The C. elegans sequencing consortium"/>
        </authorList>
    </citation>
    <scope>NUCLEOTIDE SEQUENCE [LARGE SCALE GENOMIC DNA]</scope>
    <source>
        <strain>Bristol N2</strain>
    </source>
</reference>
<organism>
    <name type="scientific">Caenorhabditis elegans</name>
    <dbReference type="NCBI Taxonomy" id="6239"/>
    <lineage>
        <taxon>Eukaryota</taxon>
        <taxon>Metazoa</taxon>
        <taxon>Ecdysozoa</taxon>
        <taxon>Nematoda</taxon>
        <taxon>Chromadorea</taxon>
        <taxon>Rhabditida</taxon>
        <taxon>Rhabditina</taxon>
        <taxon>Rhabditomorpha</taxon>
        <taxon>Rhabditoidea</taxon>
        <taxon>Rhabditidae</taxon>
        <taxon>Peloderinae</taxon>
        <taxon>Caenorhabditis</taxon>
    </lineage>
</organism>
<comment type="function">
    <text evidence="2">Binds to actin and affects the structure of the cytoskeleton. At high concentrations, profilin prevents the polymerization of actin, whereas it enhances it at low concentrations. By binding to PIP2, it inhibits the formation of IP3 and DG. Also binds to poly(L-proline) and phosphatidylinositol 4,5-bisphosphate micelles.</text>
</comment>
<comment type="subunit">
    <text evidence="1">Occurs in many kinds of cells as a complex with monomeric actin in a 1:1 ratio.</text>
</comment>
<comment type="subcellular location">
    <subcellularLocation>
        <location>Cytoplasm</location>
        <location>Cytoskeleton</location>
    </subcellularLocation>
</comment>
<comment type="tissue specificity">
    <text evidence="2">In embryos, expression is specifically detected in body wall muscle cells. In adults, expression is localized to a striking dot-like fashion in body wall muscle.</text>
</comment>
<comment type="similarity">
    <text evidence="3">Belongs to the profilin family.</text>
</comment>
<protein>
    <recommendedName>
        <fullName>Profilin-3</fullName>
    </recommendedName>
</protein>
<name>PROF3_CAEEL</name>
<keyword id="KW-0009">Actin-binding</keyword>
<keyword id="KW-0963">Cytoplasm</keyword>
<keyword id="KW-0206">Cytoskeleton</keyword>
<keyword id="KW-1185">Reference proteome</keyword>
<accession>Q21193</accession>
<accession>Q5GHR0</accession>
<sequence>MSWSDIINNNLIGSGNVSKAAILGFDGAVWAKSDNFNISVEEAVAAGKAFTSLDALLGTGLRLEGQKFLVLNADNDRIIGKQGGSGFFIYKTIQAVIISIYEKGLQPEMCSKTTGALADYFRSIKY</sequence>
<feature type="chain" id="PRO_0000199592" description="Profilin-3">
    <location>
        <begin position="1"/>
        <end position="126"/>
    </location>
</feature>
<evidence type="ECO:0000250" key="1"/>
<evidence type="ECO:0000269" key="2">
    <source>
    </source>
</evidence>
<evidence type="ECO:0000305" key="3"/>
<dbReference type="EMBL" id="AY530910">
    <property type="protein sequence ID" value="AAT01435.1"/>
    <property type="molecule type" value="mRNA"/>
</dbReference>
<dbReference type="EMBL" id="FO080324">
    <property type="protein sequence ID" value="CCD62864.1"/>
    <property type="molecule type" value="Genomic_DNA"/>
</dbReference>
<dbReference type="PIR" id="T34327">
    <property type="entry name" value="T34327"/>
</dbReference>
<dbReference type="RefSeq" id="NP_508205.1">
    <property type="nucleotide sequence ID" value="NM_075804.7"/>
</dbReference>
<dbReference type="SMR" id="Q21193"/>
<dbReference type="BioGRID" id="45413">
    <property type="interactions" value="9"/>
</dbReference>
<dbReference type="FunCoup" id="Q21193">
    <property type="interactions" value="1199"/>
</dbReference>
<dbReference type="IntAct" id="Q21193">
    <property type="interactions" value="1"/>
</dbReference>
<dbReference type="STRING" id="6239.K03E6.6.1"/>
<dbReference type="iPTMnet" id="Q21193"/>
<dbReference type="PaxDb" id="6239-K03E6.6"/>
<dbReference type="PeptideAtlas" id="Q21193"/>
<dbReference type="EnsemblMetazoa" id="K03E6.6.1">
    <property type="protein sequence ID" value="K03E6.6.1"/>
    <property type="gene ID" value="WBGene00003991"/>
</dbReference>
<dbReference type="GeneID" id="180460"/>
<dbReference type="KEGG" id="cel:CELE_K03E6.6"/>
<dbReference type="UCSC" id="K03E6.6">
    <property type="organism name" value="c. elegans"/>
</dbReference>
<dbReference type="AGR" id="WB:WBGene00003991"/>
<dbReference type="CTD" id="180460"/>
<dbReference type="WormBase" id="K03E6.6">
    <property type="protein sequence ID" value="CE07332"/>
    <property type="gene ID" value="WBGene00003991"/>
    <property type="gene designation" value="pfn-3"/>
</dbReference>
<dbReference type="eggNOG" id="KOG1755">
    <property type="taxonomic scope" value="Eukaryota"/>
</dbReference>
<dbReference type="GeneTree" id="ENSGT00730000112841"/>
<dbReference type="HOGENOM" id="CLU_120772_1_0_1"/>
<dbReference type="InParanoid" id="Q21193"/>
<dbReference type="OMA" id="GLQPEMC"/>
<dbReference type="OrthoDB" id="421374at2759"/>
<dbReference type="PhylomeDB" id="Q21193"/>
<dbReference type="PRO" id="PR:Q21193"/>
<dbReference type="Proteomes" id="UP000001940">
    <property type="component" value="Chromosome X"/>
</dbReference>
<dbReference type="Bgee" id="WBGene00003991">
    <property type="expression patterns" value="Expressed in larva and 4 other cell types or tissues"/>
</dbReference>
<dbReference type="GO" id="GO:0005938">
    <property type="term" value="C:cell cortex"/>
    <property type="evidence" value="ECO:0000318"/>
    <property type="project" value="GO_Central"/>
</dbReference>
<dbReference type="GO" id="GO:0005856">
    <property type="term" value="C:cytoskeleton"/>
    <property type="evidence" value="ECO:0007669"/>
    <property type="project" value="UniProtKB-SubCell"/>
</dbReference>
<dbReference type="GO" id="GO:0055120">
    <property type="term" value="C:striated muscle dense body"/>
    <property type="evidence" value="ECO:0000314"/>
    <property type="project" value="WormBase"/>
</dbReference>
<dbReference type="GO" id="GO:0003785">
    <property type="term" value="F:actin monomer binding"/>
    <property type="evidence" value="ECO:0000318"/>
    <property type="project" value="GO_Central"/>
</dbReference>
<dbReference type="GO" id="GO:0071689">
    <property type="term" value="P:muscle thin filament assembly"/>
    <property type="evidence" value="ECO:0000316"/>
    <property type="project" value="WormBase"/>
</dbReference>
<dbReference type="CDD" id="cd00148">
    <property type="entry name" value="PROF"/>
    <property type="match status" value="1"/>
</dbReference>
<dbReference type="FunFam" id="3.30.450.30:FF:000030">
    <property type="entry name" value="Profilin"/>
    <property type="match status" value="1"/>
</dbReference>
<dbReference type="Gene3D" id="3.30.450.30">
    <property type="entry name" value="Dynein light chain 2a, cytoplasmic"/>
    <property type="match status" value="1"/>
</dbReference>
<dbReference type="InterPro" id="IPR048278">
    <property type="entry name" value="PFN"/>
</dbReference>
<dbReference type="InterPro" id="IPR005455">
    <property type="entry name" value="PFN_euk"/>
</dbReference>
<dbReference type="InterPro" id="IPR036140">
    <property type="entry name" value="PFN_sf"/>
</dbReference>
<dbReference type="PANTHER" id="PTHR11604">
    <property type="entry name" value="PROFILIN"/>
    <property type="match status" value="1"/>
</dbReference>
<dbReference type="PANTHER" id="PTHR11604:SF0">
    <property type="entry name" value="PROFILIN"/>
    <property type="match status" value="1"/>
</dbReference>
<dbReference type="Pfam" id="PF00235">
    <property type="entry name" value="Profilin"/>
    <property type="match status" value="1"/>
</dbReference>
<dbReference type="PRINTS" id="PR00392">
    <property type="entry name" value="PROFILIN"/>
</dbReference>
<dbReference type="PRINTS" id="PR01640">
    <property type="entry name" value="PROFILINPLNT"/>
</dbReference>
<dbReference type="SMART" id="SM00392">
    <property type="entry name" value="PROF"/>
    <property type="match status" value="1"/>
</dbReference>
<dbReference type="SUPFAM" id="SSF55770">
    <property type="entry name" value="Profilin (actin-binding protein)"/>
    <property type="match status" value="1"/>
</dbReference>
<proteinExistence type="evidence at transcript level"/>